<reference key="1">
    <citation type="journal article" date="1993" name="Gene">
        <title>Cloning and characterization of multiple groEL chaperonin-encoding genes in Rhizobium meliloti.</title>
        <authorList>
            <person name="Rusanganwa E."/>
            <person name="Gupta R.S."/>
        </authorList>
    </citation>
    <scope>NUCLEOTIDE SEQUENCE [GENOMIC DNA]</scope>
    <source>
        <strain>1021</strain>
    </source>
</reference>
<reference key="2">
    <citation type="journal article" date="2001" name="Proc. Natl. Acad. Sci. U.S.A.">
        <title>The complete sequence of the 1,683-kb pSymB megaplasmid from the N2-fixing endosymbiont Sinorhizobium meliloti.</title>
        <authorList>
            <person name="Finan T.M."/>
            <person name="Weidner S."/>
            <person name="Wong K."/>
            <person name="Buhrmester J."/>
            <person name="Chain P."/>
            <person name="Vorhoelter F.J."/>
            <person name="Hernandez-Lucas I."/>
            <person name="Becker A."/>
            <person name="Cowie A."/>
            <person name="Gouzy J."/>
            <person name="Golding B."/>
            <person name="Puehler A."/>
        </authorList>
    </citation>
    <scope>NUCLEOTIDE SEQUENCE [LARGE SCALE GENOMIC DNA]</scope>
    <source>
        <strain>1021</strain>
    </source>
</reference>
<reference key="3">
    <citation type="journal article" date="2001" name="Science">
        <title>The composite genome of the legume symbiont Sinorhizobium meliloti.</title>
        <authorList>
            <person name="Galibert F."/>
            <person name="Finan T.M."/>
            <person name="Long S.R."/>
            <person name="Puehler A."/>
            <person name="Abola P."/>
            <person name="Ampe F."/>
            <person name="Barloy-Hubler F."/>
            <person name="Barnett M.J."/>
            <person name="Becker A."/>
            <person name="Boistard P."/>
            <person name="Bothe G."/>
            <person name="Boutry M."/>
            <person name="Bowser L."/>
            <person name="Buhrmester J."/>
            <person name="Cadieu E."/>
            <person name="Capela D."/>
            <person name="Chain P."/>
            <person name="Cowie A."/>
            <person name="Davis R.W."/>
            <person name="Dreano S."/>
            <person name="Federspiel N.A."/>
            <person name="Fisher R.F."/>
            <person name="Gloux S."/>
            <person name="Godrie T."/>
            <person name="Goffeau A."/>
            <person name="Golding B."/>
            <person name="Gouzy J."/>
            <person name="Gurjal M."/>
            <person name="Hernandez-Lucas I."/>
            <person name="Hong A."/>
            <person name="Huizar L."/>
            <person name="Hyman R.W."/>
            <person name="Jones T."/>
            <person name="Kahn D."/>
            <person name="Kahn M.L."/>
            <person name="Kalman S."/>
            <person name="Keating D.H."/>
            <person name="Kiss E."/>
            <person name="Komp C."/>
            <person name="Lelaure V."/>
            <person name="Masuy D."/>
            <person name="Palm C."/>
            <person name="Peck M.C."/>
            <person name="Pohl T.M."/>
            <person name="Portetelle D."/>
            <person name="Purnelle B."/>
            <person name="Ramsperger U."/>
            <person name="Surzycki R."/>
            <person name="Thebault P."/>
            <person name="Vandenbol M."/>
            <person name="Vorhoelter F.J."/>
            <person name="Weidner S."/>
            <person name="Wells D.H."/>
            <person name="Wong K."/>
            <person name="Yeh K.-C."/>
            <person name="Batut J."/>
        </authorList>
    </citation>
    <scope>NUCLEOTIDE SEQUENCE [LARGE SCALE GENOMIC DNA]</scope>
    <source>
        <strain>1021</strain>
    </source>
</reference>
<accession>P35471</accession>
<gene>
    <name evidence="1" type="primary">groEL5</name>
    <name evidence="1" type="synonym">groL5</name>
    <name type="ordered locus">RB1006</name>
    <name type="ORF">SMb21566</name>
</gene>
<dbReference type="EC" id="5.6.1.7" evidence="1"/>
<dbReference type="EMBL" id="M94191">
    <property type="protein sequence ID" value="AAA26287.1"/>
    <property type="molecule type" value="Genomic_DNA"/>
</dbReference>
<dbReference type="EMBL" id="AL591985">
    <property type="protein sequence ID" value="CAC49406.1"/>
    <property type="molecule type" value="Genomic_DNA"/>
</dbReference>
<dbReference type="PIR" id="F95967">
    <property type="entry name" value="F95967"/>
</dbReference>
<dbReference type="PIR" id="JN0512">
    <property type="entry name" value="JN0512"/>
</dbReference>
<dbReference type="RefSeq" id="NP_437546.1">
    <property type="nucleotide sequence ID" value="NC_003078.1"/>
</dbReference>
<dbReference type="SMR" id="P35471"/>
<dbReference type="EnsemblBacteria" id="CAC49406">
    <property type="protein sequence ID" value="CAC49406"/>
    <property type="gene ID" value="SM_b21566"/>
</dbReference>
<dbReference type="KEGG" id="sme:SM_b21566"/>
<dbReference type="PATRIC" id="fig|266834.11.peg.5931"/>
<dbReference type="eggNOG" id="COG0459">
    <property type="taxonomic scope" value="Bacteria"/>
</dbReference>
<dbReference type="HOGENOM" id="CLU_016503_3_0_5"/>
<dbReference type="OrthoDB" id="9766614at2"/>
<dbReference type="Proteomes" id="UP000001976">
    <property type="component" value="Plasmid pSymB"/>
</dbReference>
<dbReference type="GO" id="GO:0005737">
    <property type="term" value="C:cytoplasm"/>
    <property type="evidence" value="ECO:0007669"/>
    <property type="project" value="UniProtKB-SubCell"/>
</dbReference>
<dbReference type="GO" id="GO:0005524">
    <property type="term" value="F:ATP binding"/>
    <property type="evidence" value="ECO:0007669"/>
    <property type="project" value="UniProtKB-UniRule"/>
</dbReference>
<dbReference type="GO" id="GO:0140662">
    <property type="term" value="F:ATP-dependent protein folding chaperone"/>
    <property type="evidence" value="ECO:0007669"/>
    <property type="project" value="InterPro"/>
</dbReference>
<dbReference type="GO" id="GO:0016853">
    <property type="term" value="F:isomerase activity"/>
    <property type="evidence" value="ECO:0007669"/>
    <property type="project" value="UniProtKB-KW"/>
</dbReference>
<dbReference type="GO" id="GO:0051082">
    <property type="term" value="F:unfolded protein binding"/>
    <property type="evidence" value="ECO:0007669"/>
    <property type="project" value="UniProtKB-UniRule"/>
</dbReference>
<dbReference type="GO" id="GO:0042026">
    <property type="term" value="P:protein refolding"/>
    <property type="evidence" value="ECO:0007669"/>
    <property type="project" value="UniProtKB-UniRule"/>
</dbReference>
<dbReference type="CDD" id="cd03344">
    <property type="entry name" value="GroEL"/>
    <property type="match status" value="1"/>
</dbReference>
<dbReference type="FunFam" id="1.10.560.10:FF:000001">
    <property type="entry name" value="60 kDa chaperonin"/>
    <property type="match status" value="1"/>
</dbReference>
<dbReference type="FunFam" id="3.50.7.10:FF:000001">
    <property type="entry name" value="60 kDa chaperonin"/>
    <property type="match status" value="1"/>
</dbReference>
<dbReference type="Gene3D" id="3.50.7.10">
    <property type="entry name" value="GroEL"/>
    <property type="match status" value="1"/>
</dbReference>
<dbReference type="Gene3D" id="1.10.560.10">
    <property type="entry name" value="GroEL-like equatorial domain"/>
    <property type="match status" value="1"/>
</dbReference>
<dbReference type="Gene3D" id="3.30.260.10">
    <property type="entry name" value="TCP-1-like chaperonin intermediate domain"/>
    <property type="match status" value="1"/>
</dbReference>
<dbReference type="HAMAP" id="MF_00600">
    <property type="entry name" value="CH60"/>
    <property type="match status" value="1"/>
</dbReference>
<dbReference type="InterPro" id="IPR018370">
    <property type="entry name" value="Chaperonin_Cpn60_CS"/>
</dbReference>
<dbReference type="InterPro" id="IPR001844">
    <property type="entry name" value="Cpn60/GroEL"/>
</dbReference>
<dbReference type="InterPro" id="IPR002423">
    <property type="entry name" value="Cpn60/GroEL/TCP-1"/>
</dbReference>
<dbReference type="InterPro" id="IPR027409">
    <property type="entry name" value="GroEL-like_apical_dom_sf"/>
</dbReference>
<dbReference type="InterPro" id="IPR027413">
    <property type="entry name" value="GROEL-like_equatorial_sf"/>
</dbReference>
<dbReference type="InterPro" id="IPR027410">
    <property type="entry name" value="TCP-1-like_intermed_sf"/>
</dbReference>
<dbReference type="NCBIfam" id="TIGR02348">
    <property type="entry name" value="GroEL"/>
    <property type="match status" value="1"/>
</dbReference>
<dbReference type="NCBIfam" id="NF000592">
    <property type="entry name" value="PRK00013.1"/>
    <property type="match status" value="1"/>
</dbReference>
<dbReference type="NCBIfam" id="NF009487">
    <property type="entry name" value="PRK12849.1"/>
    <property type="match status" value="1"/>
</dbReference>
<dbReference type="NCBIfam" id="NF009488">
    <property type="entry name" value="PRK12850.1"/>
    <property type="match status" value="1"/>
</dbReference>
<dbReference type="NCBIfam" id="NF009489">
    <property type="entry name" value="PRK12851.1"/>
    <property type="match status" value="1"/>
</dbReference>
<dbReference type="PANTHER" id="PTHR45633">
    <property type="entry name" value="60 KDA HEAT SHOCK PROTEIN, MITOCHONDRIAL"/>
    <property type="match status" value="1"/>
</dbReference>
<dbReference type="Pfam" id="PF00118">
    <property type="entry name" value="Cpn60_TCP1"/>
    <property type="match status" value="1"/>
</dbReference>
<dbReference type="PRINTS" id="PR00298">
    <property type="entry name" value="CHAPERONIN60"/>
</dbReference>
<dbReference type="SUPFAM" id="SSF52029">
    <property type="entry name" value="GroEL apical domain-like"/>
    <property type="match status" value="1"/>
</dbReference>
<dbReference type="SUPFAM" id="SSF48592">
    <property type="entry name" value="GroEL equatorial domain-like"/>
    <property type="match status" value="1"/>
</dbReference>
<dbReference type="SUPFAM" id="SSF54849">
    <property type="entry name" value="GroEL-intermediate domain like"/>
    <property type="match status" value="1"/>
</dbReference>
<dbReference type="PROSITE" id="PS00296">
    <property type="entry name" value="CHAPERONINS_CPN60"/>
    <property type="match status" value="1"/>
</dbReference>
<comment type="function">
    <text evidence="1">Together with its co-chaperonin GroES, plays an essential role in assisting protein folding. The GroEL-GroES system forms a nano-cage that allows encapsulation of the non-native substrate proteins and provides a physical environment optimized to promote and accelerate protein folding.</text>
</comment>
<comment type="catalytic activity">
    <reaction evidence="1">
        <text>ATP + H2O + a folded polypeptide = ADP + phosphate + an unfolded polypeptide.</text>
        <dbReference type="EC" id="5.6.1.7"/>
    </reaction>
</comment>
<comment type="subunit">
    <text evidence="1">Forms a cylinder of 14 subunits composed of two heptameric rings stacked back-to-back. Interacts with the co-chaperonin GroES.</text>
</comment>
<comment type="subcellular location">
    <subcellularLocation>
        <location evidence="1">Cytoplasm</location>
    </subcellularLocation>
</comment>
<comment type="induction">
    <text>By heat shock.</text>
</comment>
<comment type="similarity">
    <text evidence="1">Belongs to the chaperonin (HSP60) family.</text>
</comment>
<feature type="chain" id="PRO_0000063504" description="Chaperonin GroEL 5">
    <location>
        <begin position="1"/>
        <end position="542"/>
    </location>
</feature>
<feature type="binding site" evidence="1">
    <location>
        <begin position="30"/>
        <end position="33"/>
    </location>
    <ligand>
        <name>ATP</name>
        <dbReference type="ChEBI" id="CHEBI:30616"/>
    </ligand>
</feature>
<feature type="binding site" evidence="1">
    <location>
        <position position="51"/>
    </location>
    <ligand>
        <name>ATP</name>
        <dbReference type="ChEBI" id="CHEBI:30616"/>
    </ligand>
</feature>
<feature type="binding site" evidence="1">
    <location>
        <begin position="87"/>
        <end position="91"/>
    </location>
    <ligand>
        <name>ATP</name>
        <dbReference type="ChEBI" id="CHEBI:30616"/>
    </ligand>
</feature>
<feature type="binding site" evidence="1">
    <location>
        <position position="415"/>
    </location>
    <ligand>
        <name>ATP</name>
        <dbReference type="ChEBI" id="CHEBI:30616"/>
    </ligand>
</feature>
<feature type="binding site" evidence="1">
    <location>
        <position position="496"/>
    </location>
    <ligand>
        <name>ATP</name>
        <dbReference type="ChEBI" id="CHEBI:30616"/>
    </ligand>
</feature>
<feature type="sequence conflict" description="In Ref. 1; AAA26287." evidence="2" ref="1">
    <original>A</original>
    <variation>R</variation>
    <location>
        <position position="239"/>
    </location>
</feature>
<feature type="sequence conflict" description="In Ref. 1; AAA26287." evidence="2" ref="1">
    <original>L</original>
    <variation>V</variation>
    <location>
        <position position="400"/>
    </location>
</feature>
<feature type="sequence conflict" description="In Ref. 1; AAA26287." evidence="2" ref="1">
    <original>A</original>
    <variation>G</variation>
    <location>
        <position position="504"/>
    </location>
</feature>
<feature type="sequence conflict" description="In Ref. 1; AAA26287." evidence="2" ref="1">
    <original>LPAGG</original>
    <variation>FRPR</variation>
    <location>
        <begin position="534"/>
        <end position="538"/>
    </location>
</feature>
<geneLocation type="plasmid">
    <name>pSymB</name>
    <name>megaplasmid 2</name>
</geneLocation>
<protein>
    <recommendedName>
        <fullName evidence="1">Chaperonin GroEL 5</fullName>
        <ecNumber evidence="1">5.6.1.7</ecNumber>
    </recommendedName>
    <alternativeName>
        <fullName evidence="1">60 kDa chaperonin 5</fullName>
    </alternativeName>
    <alternativeName>
        <fullName evidence="1">Chaperonin-60 5</fullName>
        <shortName evidence="1">Cpn60 5</shortName>
    </alternativeName>
</protein>
<keyword id="KW-0067">ATP-binding</keyword>
<keyword id="KW-0143">Chaperone</keyword>
<keyword id="KW-0963">Cytoplasm</keyword>
<keyword id="KW-0413">Isomerase</keyword>
<keyword id="KW-0547">Nucleotide-binding</keyword>
<keyword id="KW-0614">Plasmid</keyword>
<keyword id="KW-1185">Reference proteome</keyword>
<keyword id="KW-0346">Stress response</keyword>
<name>CH605_RHIME</name>
<proteinExistence type="evidence at transcript level"/>
<organism>
    <name type="scientific">Rhizobium meliloti (strain 1021)</name>
    <name type="common">Ensifer meliloti</name>
    <name type="synonym">Sinorhizobium meliloti</name>
    <dbReference type="NCBI Taxonomy" id="266834"/>
    <lineage>
        <taxon>Bacteria</taxon>
        <taxon>Pseudomonadati</taxon>
        <taxon>Pseudomonadota</taxon>
        <taxon>Alphaproteobacteria</taxon>
        <taxon>Hyphomicrobiales</taxon>
        <taxon>Rhizobiaceae</taxon>
        <taxon>Sinorhizobium/Ensifer group</taxon>
        <taxon>Sinorhizobium</taxon>
    </lineage>
</organism>
<evidence type="ECO:0000255" key="1">
    <source>
        <dbReference type="HAMAP-Rule" id="MF_00600"/>
    </source>
</evidence>
<evidence type="ECO:0000305" key="2"/>
<sequence>MAAKEVKFQTDARERMLRGVDVLANAVKVTLGPKGRNVVIDKSFGAPRITKDGVSVAKEIELEDKFENMGAQMLREVASRTNDLAGDGTTTATVLAQAIVREGAKAVASGMNPMDLKRGIDLAVDAVVKELKNNARKISKNSEIAQVGTISANGDTEIGRYLAEAMEKVGNEGVITVEEAKTAETELEVVEGMQFDRGYLSPYFITNQDKMRVELEDPYILIHEKKLSNLQAMLPVLEAVVQSGKPLLIIAEDVEGEALATLVVNKLRGGLKVAAVKAPGFGDRRKAMLEDIAILTGGTVVSEDLGIKLESVTLDMLGRAKKVSIEKENTTIIDGAGSKADIEGRTAQIRAQIEETTSDYDREKLQERLAKLAGGVAVIRVGGSTEVEVKEKKDRVDDALHATRAAVEEGILPGGGVALLRAVKALDGLKTANNDQRVGVDLVRRAIEAPVRQIAENAGAEGSIIVGKLREKTEFSYGWNAQTNEYGDLYAMGVIDPAKVVRTALQDAASVAGLLVTTEAMIAEKPKKEAAPALPAGGGMDF</sequence>